<proteinExistence type="inferred from homology"/>
<dbReference type="EC" id="2.1.3.2" evidence="1"/>
<dbReference type="EMBL" id="CP000494">
    <property type="protein sequence ID" value="ABQ36752.1"/>
    <property type="molecule type" value="Genomic_DNA"/>
</dbReference>
<dbReference type="RefSeq" id="WP_012044738.1">
    <property type="nucleotide sequence ID" value="NC_009485.1"/>
</dbReference>
<dbReference type="SMR" id="A5EKQ8"/>
<dbReference type="STRING" id="288000.BBta_4725"/>
<dbReference type="KEGG" id="bbt:BBta_4725"/>
<dbReference type="eggNOG" id="COG0540">
    <property type="taxonomic scope" value="Bacteria"/>
</dbReference>
<dbReference type="HOGENOM" id="CLU_043846_2_0_5"/>
<dbReference type="OrthoDB" id="9774690at2"/>
<dbReference type="UniPathway" id="UPA00070">
    <property type="reaction ID" value="UER00116"/>
</dbReference>
<dbReference type="Proteomes" id="UP000000246">
    <property type="component" value="Chromosome"/>
</dbReference>
<dbReference type="GO" id="GO:0005829">
    <property type="term" value="C:cytosol"/>
    <property type="evidence" value="ECO:0007669"/>
    <property type="project" value="TreeGrafter"/>
</dbReference>
<dbReference type="GO" id="GO:0016597">
    <property type="term" value="F:amino acid binding"/>
    <property type="evidence" value="ECO:0007669"/>
    <property type="project" value="InterPro"/>
</dbReference>
<dbReference type="GO" id="GO:0004070">
    <property type="term" value="F:aspartate carbamoyltransferase activity"/>
    <property type="evidence" value="ECO:0007669"/>
    <property type="project" value="UniProtKB-UniRule"/>
</dbReference>
<dbReference type="GO" id="GO:0006207">
    <property type="term" value="P:'de novo' pyrimidine nucleobase biosynthetic process"/>
    <property type="evidence" value="ECO:0007669"/>
    <property type="project" value="InterPro"/>
</dbReference>
<dbReference type="GO" id="GO:0044205">
    <property type="term" value="P:'de novo' UMP biosynthetic process"/>
    <property type="evidence" value="ECO:0007669"/>
    <property type="project" value="UniProtKB-UniRule"/>
</dbReference>
<dbReference type="GO" id="GO:0006520">
    <property type="term" value="P:amino acid metabolic process"/>
    <property type="evidence" value="ECO:0007669"/>
    <property type="project" value="InterPro"/>
</dbReference>
<dbReference type="FunFam" id="3.40.50.1370:FF:000007">
    <property type="entry name" value="Aspartate carbamoyltransferase"/>
    <property type="match status" value="1"/>
</dbReference>
<dbReference type="Gene3D" id="3.40.50.1370">
    <property type="entry name" value="Aspartate/ornithine carbamoyltransferase"/>
    <property type="match status" value="2"/>
</dbReference>
<dbReference type="HAMAP" id="MF_00001">
    <property type="entry name" value="Asp_carb_tr"/>
    <property type="match status" value="1"/>
</dbReference>
<dbReference type="InterPro" id="IPR006132">
    <property type="entry name" value="Asp/Orn_carbamoyltranf_P-bd"/>
</dbReference>
<dbReference type="InterPro" id="IPR006130">
    <property type="entry name" value="Asp/Orn_carbamoylTrfase"/>
</dbReference>
<dbReference type="InterPro" id="IPR036901">
    <property type="entry name" value="Asp/Orn_carbamoylTrfase_sf"/>
</dbReference>
<dbReference type="InterPro" id="IPR002082">
    <property type="entry name" value="Asp_carbamoyltransf"/>
</dbReference>
<dbReference type="InterPro" id="IPR006131">
    <property type="entry name" value="Asp_carbamoyltransf_Asp/Orn-bd"/>
</dbReference>
<dbReference type="NCBIfam" id="TIGR00670">
    <property type="entry name" value="asp_carb_tr"/>
    <property type="match status" value="1"/>
</dbReference>
<dbReference type="NCBIfam" id="NF002032">
    <property type="entry name" value="PRK00856.1"/>
    <property type="match status" value="1"/>
</dbReference>
<dbReference type="PANTHER" id="PTHR45753:SF6">
    <property type="entry name" value="ASPARTATE CARBAMOYLTRANSFERASE"/>
    <property type="match status" value="1"/>
</dbReference>
<dbReference type="PANTHER" id="PTHR45753">
    <property type="entry name" value="ORNITHINE CARBAMOYLTRANSFERASE, MITOCHONDRIAL"/>
    <property type="match status" value="1"/>
</dbReference>
<dbReference type="Pfam" id="PF00185">
    <property type="entry name" value="OTCace"/>
    <property type="match status" value="1"/>
</dbReference>
<dbReference type="Pfam" id="PF02729">
    <property type="entry name" value="OTCace_N"/>
    <property type="match status" value="1"/>
</dbReference>
<dbReference type="PRINTS" id="PR00100">
    <property type="entry name" value="AOTCASE"/>
</dbReference>
<dbReference type="PRINTS" id="PR00101">
    <property type="entry name" value="ATCASE"/>
</dbReference>
<dbReference type="SUPFAM" id="SSF53671">
    <property type="entry name" value="Aspartate/ornithine carbamoyltransferase"/>
    <property type="match status" value="1"/>
</dbReference>
<dbReference type="PROSITE" id="PS00097">
    <property type="entry name" value="CARBAMOYLTRANSFERASE"/>
    <property type="match status" value="1"/>
</dbReference>
<protein>
    <recommendedName>
        <fullName evidence="1">Aspartate carbamoyltransferase catalytic subunit</fullName>
        <ecNumber evidence="1">2.1.3.2</ecNumber>
    </recommendedName>
    <alternativeName>
        <fullName evidence="1">Aspartate transcarbamylase</fullName>
        <shortName evidence="1">ATCase</shortName>
    </alternativeName>
</protein>
<feature type="chain" id="PRO_0000301557" description="Aspartate carbamoyltransferase catalytic subunit">
    <location>
        <begin position="1"/>
        <end position="317"/>
    </location>
</feature>
<feature type="binding site" evidence="1">
    <location>
        <position position="66"/>
    </location>
    <ligand>
        <name>carbamoyl phosphate</name>
        <dbReference type="ChEBI" id="CHEBI:58228"/>
    </ligand>
</feature>
<feature type="binding site" evidence="1">
    <location>
        <position position="67"/>
    </location>
    <ligand>
        <name>carbamoyl phosphate</name>
        <dbReference type="ChEBI" id="CHEBI:58228"/>
    </ligand>
</feature>
<feature type="binding site" evidence="1">
    <location>
        <position position="94"/>
    </location>
    <ligand>
        <name>L-aspartate</name>
        <dbReference type="ChEBI" id="CHEBI:29991"/>
    </ligand>
</feature>
<feature type="binding site" evidence="1">
    <location>
        <position position="116"/>
    </location>
    <ligand>
        <name>carbamoyl phosphate</name>
        <dbReference type="ChEBI" id="CHEBI:58228"/>
    </ligand>
</feature>
<feature type="binding site" evidence="1">
    <location>
        <position position="144"/>
    </location>
    <ligand>
        <name>carbamoyl phosphate</name>
        <dbReference type="ChEBI" id="CHEBI:58228"/>
    </ligand>
</feature>
<feature type="binding site" evidence="1">
    <location>
        <position position="147"/>
    </location>
    <ligand>
        <name>carbamoyl phosphate</name>
        <dbReference type="ChEBI" id="CHEBI:58228"/>
    </ligand>
</feature>
<feature type="binding site" evidence="1">
    <location>
        <position position="177"/>
    </location>
    <ligand>
        <name>L-aspartate</name>
        <dbReference type="ChEBI" id="CHEBI:29991"/>
    </ligand>
</feature>
<feature type="binding site" evidence="1">
    <location>
        <position position="231"/>
    </location>
    <ligand>
        <name>L-aspartate</name>
        <dbReference type="ChEBI" id="CHEBI:29991"/>
    </ligand>
</feature>
<feature type="binding site" evidence="1">
    <location>
        <position position="272"/>
    </location>
    <ligand>
        <name>carbamoyl phosphate</name>
        <dbReference type="ChEBI" id="CHEBI:58228"/>
    </ligand>
</feature>
<feature type="binding site" evidence="1">
    <location>
        <position position="273"/>
    </location>
    <ligand>
        <name>carbamoyl phosphate</name>
        <dbReference type="ChEBI" id="CHEBI:58228"/>
    </ligand>
</feature>
<reference key="1">
    <citation type="journal article" date="2007" name="Science">
        <title>Legumes symbioses: absence of nod genes in photosynthetic bradyrhizobia.</title>
        <authorList>
            <person name="Giraud E."/>
            <person name="Moulin L."/>
            <person name="Vallenet D."/>
            <person name="Barbe V."/>
            <person name="Cytryn E."/>
            <person name="Avarre J.-C."/>
            <person name="Jaubert M."/>
            <person name="Simon D."/>
            <person name="Cartieaux F."/>
            <person name="Prin Y."/>
            <person name="Bena G."/>
            <person name="Hannibal L."/>
            <person name="Fardoux J."/>
            <person name="Kojadinovic M."/>
            <person name="Vuillet L."/>
            <person name="Lajus A."/>
            <person name="Cruveiller S."/>
            <person name="Rouy Z."/>
            <person name="Mangenot S."/>
            <person name="Segurens B."/>
            <person name="Dossat C."/>
            <person name="Franck W.L."/>
            <person name="Chang W.-S."/>
            <person name="Saunders E."/>
            <person name="Bruce D."/>
            <person name="Richardson P."/>
            <person name="Normand P."/>
            <person name="Dreyfus B."/>
            <person name="Pignol D."/>
            <person name="Stacey G."/>
            <person name="Emerich D."/>
            <person name="Vermeglio A."/>
            <person name="Medigue C."/>
            <person name="Sadowsky M."/>
        </authorList>
    </citation>
    <scope>NUCLEOTIDE SEQUENCE [LARGE SCALE GENOMIC DNA]</scope>
    <source>
        <strain>BTAi1 / ATCC BAA-1182</strain>
    </source>
</reference>
<gene>
    <name evidence="1" type="primary">pyrB</name>
    <name type="ordered locus">BBta_4725</name>
</gene>
<name>PYRB_BRASB</name>
<comment type="function">
    <text evidence="1">Catalyzes the condensation of carbamoyl phosphate and aspartate to form carbamoyl aspartate and inorganic phosphate, the committed step in the de novo pyrimidine nucleotide biosynthesis pathway.</text>
</comment>
<comment type="catalytic activity">
    <reaction evidence="1">
        <text>carbamoyl phosphate + L-aspartate = N-carbamoyl-L-aspartate + phosphate + H(+)</text>
        <dbReference type="Rhea" id="RHEA:20013"/>
        <dbReference type="ChEBI" id="CHEBI:15378"/>
        <dbReference type="ChEBI" id="CHEBI:29991"/>
        <dbReference type="ChEBI" id="CHEBI:32814"/>
        <dbReference type="ChEBI" id="CHEBI:43474"/>
        <dbReference type="ChEBI" id="CHEBI:58228"/>
        <dbReference type="EC" id="2.1.3.2"/>
    </reaction>
</comment>
<comment type="pathway">
    <text evidence="1">Pyrimidine metabolism; UMP biosynthesis via de novo pathway; (S)-dihydroorotate from bicarbonate: step 2/3.</text>
</comment>
<comment type="subunit">
    <text evidence="1">Heterododecamer (2C3:3R2) of six catalytic PyrB chains organized as two trimers (C3), and six regulatory PyrI chains organized as three dimers (R2).</text>
</comment>
<comment type="similarity">
    <text evidence="1">Belongs to the aspartate/ornithine carbamoyltransferase superfamily. ATCase family.</text>
</comment>
<sequence>MATSPKSTFVLGHRHLLGIEGLSAHDITGLLDLSEEYVELNRQVDKKRTVLRGRTQVNLFFEASTRTQSSFELAGKRLGADVMNMSVSSSSIKKGETLMDTAVTLNAMHPDILVVRHHASGAVELLARKVDGSVINAGDGAHEHPTQALLDALTIRRNKGRLEGLVIAICGDVLHSRVARSNILLLNTMGARVRVVAPSTLLPPGIERMGVEVARDMREGLNGADIVMMLRLQRERMNGSFVPSSSEYFQYFGLDQKKLAYAKPDALVMHPGPMNRGVEIDSIVADGAQSLIREQVEMGVAVRMAVLEALARNLPNA</sequence>
<organism>
    <name type="scientific">Bradyrhizobium sp. (strain BTAi1 / ATCC BAA-1182)</name>
    <dbReference type="NCBI Taxonomy" id="288000"/>
    <lineage>
        <taxon>Bacteria</taxon>
        <taxon>Pseudomonadati</taxon>
        <taxon>Pseudomonadota</taxon>
        <taxon>Alphaproteobacteria</taxon>
        <taxon>Hyphomicrobiales</taxon>
        <taxon>Nitrobacteraceae</taxon>
        <taxon>Bradyrhizobium</taxon>
    </lineage>
</organism>
<evidence type="ECO:0000255" key="1">
    <source>
        <dbReference type="HAMAP-Rule" id="MF_00001"/>
    </source>
</evidence>
<keyword id="KW-0665">Pyrimidine biosynthesis</keyword>
<keyword id="KW-1185">Reference proteome</keyword>
<keyword id="KW-0808">Transferase</keyword>
<accession>A5EKQ8</accession>